<organism>
    <name type="scientific">Escherichia coli O8 (strain IAI1)</name>
    <dbReference type="NCBI Taxonomy" id="585034"/>
    <lineage>
        <taxon>Bacteria</taxon>
        <taxon>Pseudomonadati</taxon>
        <taxon>Pseudomonadota</taxon>
        <taxon>Gammaproteobacteria</taxon>
        <taxon>Enterobacterales</taxon>
        <taxon>Enterobacteriaceae</taxon>
        <taxon>Escherichia</taxon>
    </lineage>
</organism>
<gene>
    <name evidence="1" type="primary">apt</name>
    <name type="ordered locus">ECIAI1_0472</name>
</gene>
<evidence type="ECO:0000255" key="1">
    <source>
        <dbReference type="HAMAP-Rule" id="MF_00004"/>
    </source>
</evidence>
<sequence length="183" mass="19859">MTATAQQLEYLKNSIKSIQDYPKPGILFRDVTSLLEDPKAYALSIDLLVERYKNAGITKVVGTEARGFLFGAPVALGLGVGFVPVRKPGKLPRETISETYDLEYGTDQLEIHVDAIKPGDKVLVVDDLLATGGTIEATVKLIRRLGGEVADAAFIINLFDLGGEQRLEKQGITSYSLVPFPGH</sequence>
<accession>B7M3W1</accession>
<comment type="function">
    <text evidence="1">Catalyzes a salvage reaction resulting in the formation of AMP, that is energically less costly than de novo synthesis.</text>
</comment>
<comment type="catalytic activity">
    <reaction evidence="1">
        <text>AMP + diphosphate = 5-phospho-alpha-D-ribose 1-diphosphate + adenine</text>
        <dbReference type="Rhea" id="RHEA:16609"/>
        <dbReference type="ChEBI" id="CHEBI:16708"/>
        <dbReference type="ChEBI" id="CHEBI:33019"/>
        <dbReference type="ChEBI" id="CHEBI:58017"/>
        <dbReference type="ChEBI" id="CHEBI:456215"/>
        <dbReference type="EC" id="2.4.2.7"/>
    </reaction>
</comment>
<comment type="pathway">
    <text evidence="1">Purine metabolism; AMP biosynthesis via salvage pathway; AMP from adenine: step 1/1.</text>
</comment>
<comment type="subunit">
    <text evidence="1">Homodimer.</text>
</comment>
<comment type="subcellular location">
    <subcellularLocation>
        <location evidence="1">Cytoplasm</location>
    </subcellularLocation>
</comment>
<comment type="similarity">
    <text evidence="1">Belongs to the purine/pyrimidine phosphoribosyltransferase family.</text>
</comment>
<proteinExistence type="inferred from homology"/>
<reference key="1">
    <citation type="journal article" date="2009" name="PLoS Genet.">
        <title>Organised genome dynamics in the Escherichia coli species results in highly diverse adaptive paths.</title>
        <authorList>
            <person name="Touchon M."/>
            <person name="Hoede C."/>
            <person name="Tenaillon O."/>
            <person name="Barbe V."/>
            <person name="Baeriswyl S."/>
            <person name="Bidet P."/>
            <person name="Bingen E."/>
            <person name="Bonacorsi S."/>
            <person name="Bouchier C."/>
            <person name="Bouvet O."/>
            <person name="Calteau A."/>
            <person name="Chiapello H."/>
            <person name="Clermont O."/>
            <person name="Cruveiller S."/>
            <person name="Danchin A."/>
            <person name="Diard M."/>
            <person name="Dossat C."/>
            <person name="Karoui M.E."/>
            <person name="Frapy E."/>
            <person name="Garry L."/>
            <person name="Ghigo J.M."/>
            <person name="Gilles A.M."/>
            <person name="Johnson J."/>
            <person name="Le Bouguenec C."/>
            <person name="Lescat M."/>
            <person name="Mangenot S."/>
            <person name="Martinez-Jehanne V."/>
            <person name="Matic I."/>
            <person name="Nassif X."/>
            <person name="Oztas S."/>
            <person name="Petit M.A."/>
            <person name="Pichon C."/>
            <person name="Rouy Z."/>
            <person name="Ruf C.S."/>
            <person name="Schneider D."/>
            <person name="Tourret J."/>
            <person name="Vacherie B."/>
            <person name="Vallenet D."/>
            <person name="Medigue C."/>
            <person name="Rocha E.P.C."/>
            <person name="Denamur E."/>
        </authorList>
    </citation>
    <scope>NUCLEOTIDE SEQUENCE [LARGE SCALE GENOMIC DNA]</scope>
    <source>
        <strain>IAI1</strain>
    </source>
</reference>
<keyword id="KW-0963">Cytoplasm</keyword>
<keyword id="KW-0328">Glycosyltransferase</keyword>
<keyword id="KW-0660">Purine salvage</keyword>
<keyword id="KW-0808">Transferase</keyword>
<dbReference type="EC" id="2.4.2.7" evidence="1"/>
<dbReference type="EMBL" id="CU928160">
    <property type="protein sequence ID" value="CAQ97344.1"/>
    <property type="molecule type" value="Genomic_DNA"/>
</dbReference>
<dbReference type="RefSeq" id="WP_000127356.1">
    <property type="nucleotide sequence ID" value="NC_011741.1"/>
</dbReference>
<dbReference type="SMR" id="B7M3W1"/>
<dbReference type="GeneID" id="93776981"/>
<dbReference type="KEGG" id="ecr:ECIAI1_0472"/>
<dbReference type="HOGENOM" id="CLU_063339_3_0_6"/>
<dbReference type="UniPathway" id="UPA00588">
    <property type="reaction ID" value="UER00646"/>
</dbReference>
<dbReference type="GO" id="GO:0005737">
    <property type="term" value="C:cytoplasm"/>
    <property type="evidence" value="ECO:0007669"/>
    <property type="project" value="UniProtKB-SubCell"/>
</dbReference>
<dbReference type="GO" id="GO:0002055">
    <property type="term" value="F:adenine binding"/>
    <property type="evidence" value="ECO:0007669"/>
    <property type="project" value="TreeGrafter"/>
</dbReference>
<dbReference type="GO" id="GO:0003999">
    <property type="term" value="F:adenine phosphoribosyltransferase activity"/>
    <property type="evidence" value="ECO:0007669"/>
    <property type="project" value="UniProtKB-UniRule"/>
</dbReference>
<dbReference type="GO" id="GO:0016208">
    <property type="term" value="F:AMP binding"/>
    <property type="evidence" value="ECO:0007669"/>
    <property type="project" value="TreeGrafter"/>
</dbReference>
<dbReference type="GO" id="GO:0006168">
    <property type="term" value="P:adenine salvage"/>
    <property type="evidence" value="ECO:0007669"/>
    <property type="project" value="InterPro"/>
</dbReference>
<dbReference type="GO" id="GO:0044209">
    <property type="term" value="P:AMP salvage"/>
    <property type="evidence" value="ECO:0007669"/>
    <property type="project" value="UniProtKB-UniRule"/>
</dbReference>
<dbReference type="GO" id="GO:0006166">
    <property type="term" value="P:purine ribonucleoside salvage"/>
    <property type="evidence" value="ECO:0007669"/>
    <property type="project" value="UniProtKB-KW"/>
</dbReference>
<dbReference type="CDD" id="cd06223">
    <property type="entry name" value="PRTases_typeI"/>
    <property type="match status" value="1"/>
</dbReference>
<dbReference type="FunFam" id="3.40.50.2020:FF:000004">
    <property type="entry name" value="Adenine phosphoribosyltransferase"/>
    <property type="match status" value="1"/>
</dbReference>
<dbReference type="Gene3D" id="3.40.50.2020">
    <property type="match status" value="1"/>
</dbReference>
<dbReference type="HAMAP" id="MF_00004">
    <property type="entry name" value="Aden_phosphoribosyltr"/>
    <property type="match status" value="1"/>
</dbReference>
<dbReference type="InterPro" id="IPR005764">
    <property type="entry name" value="Ade_phspho_trans"/>
</dbReference>
<dbReference type="InterPro" id="IPR000836">
    <property type="entry name" value="PRibTrfase_dom"/>
</dbReference>
<dbReference type="InterPro" id="IPR029057">
    <property type="entry name" value="PRTase-like"/>
</dbReference>
<dbReference type="InterPro" id="IPR050054">
    <property type="entry name" value="UPRTase/APRTase"/>
</dbReference>
<dbReference type="NCBIfam" id="TIGR01090">
    <property type="entry name" value="apt"/>
    <property type="match status" value="1"/>
</dbReference>
<dbReference type="NCBIfam" id="NF002632">
    <property type="entry name" value="PRK02304.1-1"/>
    <property type="match status" value="1"/>
</dbReference>
<dbReference type="NCBIfam" id="NF002633">
    <property type="entry name" value="PRK02304.1-2"/>
    <property type="match status" value="1"/>
</dbReference>
<dbReference type="NCBIfam" id="NF002634">
    <property type="entry name" value="PRK02304.1-3"/>
    <property type="match status" value="1"/>
</dbReference>
<dbReference type="NCBIfam" id="NF002636">
    <property type="entry name" value="PRK02304.1-5"/>
    <property type="match status" value="1"/>
</dbReference>
<dbReference type="PANTHER" id="PTHR32315">
    <property type="entry name" value="ADENINE PHOSPHORIBOSYLTRANSFERASE"/>
    <property type="match status" value="1"/>
</dbReference>
<dbReference type="PANTHER" id="PTHR32315:SF3">
    <property type="entry name" value="ADENINE PHOSPHORIBOSYLTRANSFERASE"/>
    <property type="match status" value="1"/>
</dbReference>
<dbReference type="Pfam" id="PF00156">
    <property type="entry name" value="Pribosyltran"/>
    <property type="match status" value="1"/>
</dbReference>
<dbReference type="SUPFAM" id="SSF53271">
    <property type="entry name" value="PRTase-like"/>
    <property type="match status" value="1"/>
</dbReference>
<dbReference type="PROSITE" id="PS00103">
    <property type="entry name" value="PUR_PYR_PR_TRANSFER"/>
    <property type="match status" value="1"/>
</dbReference>
<protein>
    <recommendedName>
        <fullName evidence="1">Adenine phosphoribosyltransferase</fullName>
        <shortName evidence="1">APRT</shortName>
        <ecNumber evidence="1">2.4.2.7</ecNumber>
    </recommendedName>
</protein>
<feature type="chain" id="PRO_1000116173" description="Adenine phosphoribosyltransferase">
    <location>
        <begin position="1"/>
        <end position="183"/>
    </location>
</feature>
<name>APT_ECO8A</name>